<comment type="catalytic activity">
    <reaction evidence="1">
        <text>urea + 2 H2O + H(+) = hydrogencarbonate + 2 NH4(+)</text>
        <dbReference type="Rhea" id="RHEA:20557"/>
        <dbReference type="ChEBI" id="CHEBI:15377"/>
        <dbReference type="ChEBI" id="CHEBI:15378"/>
        <dbReference type="ChEBI" id="CHEBI:16199"/>
        <dbReference type="ChEBI" id="CHEBI:17544"/>
        <dbReference type="ChEBI" id="CHEBI:28938"/>
        <dbReference type="EC" id="3.5.1.5"/>
    </reaction>
</comment>
<comment type="pathway">
    <text evidence="1">Nitrogen metabolism; urea degradation; CO(2) and NH(3) from urea (urease route): step 1/1.</text>
</comment>
<comment type="subunit">
    <text evidence="1">Heterotrimer of UreA (gamma), UreB (beta) and UreC (alpha) subunits. Three heterotrimers associate to form the active enzyme.</text>
</comment>
<comment type="subcellular location">
    <subcellularLocation>
        <location evidence="1">Cytoplasm</location>
    </subcellularLocation>
</comment>
<comment type="similarity">
    <text evidence="1">Belongs to the urease beta subunit family.</text>
</comment>
<keyword id="KW-0963">Cytoplasm</keyword>
<keyword id="KW-0378">Hydrolase</keyword>
<accession>P16123</accession>
<name>URE2_PROHU</name>
<reference key="1">
    <citation type="journal article" date="1990" name="FEMS Microbiol. Lett.">
        <title>Cloning of the genes encoding urease from Proteus vulgaris and sequencing of the structural genes.</title>
        <authorList>
            <person name="Moersdorf G."/>
            <person name="Kaltwasser H."/>
        </authorList>
    </citation>
    <scope>NUCLEOTIDE SEQUENCE [GENOMIC DNA]</scope>
    <source>
        <strain>ATCC 13315 / DSM 30118 / JCM 1668 / NBRC 3851 / NCIMB 4175 / NCTC 4175 / NRRL B-3405</strain>
    </source>
</reference>
<dbReference type="EC" id="3.5.1.5" evidence="1"/>
<dbReference type="EMBL" id="X51816">
    <property type="protein sequence ID" value="CAA36114.1"/>
    <property type="molecule type" value="Genomic_DNA"/>
</dbReference>
<dbReference type="PIR" id="S08479">
    <property type="entry name" value="S08479"/>
</dbReference>
<dbReference type="SMR" id="P16123"/>
<dbReference type="STRING" id="1354271.M997_0892"/>
<dbReference type="UniPathway" id="UPA00258">
    <property type="reaction ID" value="UER00370"/>
</dbReference>
<dbReference type="GO" id="GO:0035550">
    <property type="term" value="C:urease complex"/>
    <property type="evidence" value="ECO:0007669"/>
    <property type="project" value="InterPro"/>
</dbReference>
<dbReference type="GO" id="GO:0009039">
    <property type="term" value="F:urease activity"/>
    <property type="evidence" value="ECO:0007669"/>
    <property type="project" value="UniProtKB-UniRule"/>
</dbReference>
<dbReference type="GO" id="GO:0043419">
    <property type="term" value="P:urea catabolic process"/>
    <property type="evidence" value="ECO:0007669"/>
    <property type="project" value="UniProtKB-UniRule"/>
</dbReference>
<dbReference type="CDD" id="cd00407">
    <property type="entry name" value="Urease_beta"/>
    <property type="match status" value="1"/>
</dbReference>
<dbReference type="FunFam" id="2.10.150.10:FF:000001">
    <property type="entry name" value="Urease subunit beta"/>
    <property type="match status" value="1"/>
</dbReference>
<dbReference type="Gene3D" id="2.10.150.10">
    <property type="entry name" value="Urease, beta subunit"/>
    <property type="match status" value="1"/>
</dbReference>
<dbReference type="HAMAP" id="MF_01954">
    <property type="entry name" value="Urease_beta"/>
    <property type="match status" value="1"/>
</dbReference>
<dbReference type="InterPro" id="IPR002019">
    <property type="entry name" value="Urease_beta-like"/>
</dbReference>
<dbReference type="InterPro" id="IPR036461">
    <property type="entry name" value="Urease_betasu_sf"/>
</dbReference>
<dbReference type="InterPro" id="IPR050069">
    <property type="entry name" value="Urease_subunit"/>
</dbReference>
<dbReference type="NCBIfam" id="NF009682">
    <property type="entry name" value="PRK13203.1"/>
    <property type="match status" value="1"/>
</dbReference>
<dbReference type="NCBIfam" id="TIGR00192">
    <property type="entry name" value="urease_beta"/>
    <property type="match status" value="1"/>
</dbReference>
<dbReference type="PANTHER" id="PTHR33569">
    <property type="entry name" value="UREASE"/>
    <property type="match status" value="1"/>
</dbReference>
<dbReference type="PANTHER" id="PTHR33569:SF1">
    <property type="entry name" value="UREASE"/>
    <property type="match status" value="1"/>
</dbReference>
<dbReference type="Pfam" id="PF00699">
    <property type="entry name" value="Urease_beta"/>
    <property type="match status" value="1"/>
</dbReference>
<dbReference type="SUPFAM" id="SSF51278">
    <property type="entry name" value="Urease, beta-subunit"/>
    <property type="match status" value="1"/>
</dbReference>
<gene>
    <name evidence="1" type="primary">ureB</name>
</gene>
<evidence type="ECO:0000255" key="1">
    <source>
        <dbReference type="HAMAP-Rule" id="MF_01954"/>
    </source>
</evidence>
<protein>
    <recommendedName>
        <fullName evidence="1">Urease subunit beta</fullName>
        <ecNumber evidence="1">3.5.1.5</ecNumber>
    </recommendedName>
    <alternativeName>
        <fullName evidence="1">Urea amidohydrolase subunit beta</fullName>
    </alternativeName>
</protein>
<sequence length="108" mass="12152">MIPGEIRVNQALGDIELNAGRETKIIQVANHGDRPVQVGSHYHVYEVNEALKFEREETLGFRLNIPAGMAVRFEPGQCRTVELVAFDGKREIYGFHGKVMGKLESENK</sequence>
<feature type="chain" id="PRO_0000067581" description="Urease subunit beta">
    <location>
        <begin position="1"/>
        <end position="108"/>
    </location>
</feature>
<proteinExistence type="inferred from homology"/>
<organism>
    <name type="scientific">Proteus hauseri</name>
    <dbReference type="NCBI Taxonomy" id="183417"/>
    <lineage>
        <taxon>Bacteria</taxon>
        <taxon>Pseudomonadati</taxon>
        <taxon>Pseudomonadota</taxon>
        <taxon>Gammaproteobacteria</taxon>
        <taxon>Enterobacterales</taxon>
        <taxon>Morganellaceae</taxon>
        <taxon>Proteus</taxon>
    </lineage>
</organism>